<evidence type="ECO:0000255" key="1">
    <source>
        <dbReference type="HAMAP-Rule" id="MF_00291"/>
    </source>
</evidence>
<evidence type="ECO:0000305" key="2"/>
<protein>
    <recommendedName>
        <fullName evidence="1">Small ribosomal subunit protein uS2</fullName>
    </recommendedName>
    <alternativeName>
        <fullName evidence="2">30S ribosomal protein S2</fullName>
    </alternativeName>
</protein>
<proteinExistence type="inferred from homology"/>
<comment type="similarity">
    <text evidence="1">Belongs to the universal ribosomal protein uS2 family.</text>
</comment>
<gene>
    <name evidence="1" type="primary">rpsB</name>
    <name type="ordered locus">Ajs_2585</name>
</gene>
<keyword id="KW-0687">Ribonucleoprotein</keyword>
<keyword id="KW-0689">Ribosomal protein</keyword>
<organism>
    <name type="scientific">Acidovorax sp. (strain JS42)</name>
    <dbReference type="NCBI Taxonomy" id="232721"/>
    <lineage>
        <taxon>Bacteria</taxon>
        <taxon>Pseudomonadati</taxon>
        <taxon>Pseudomonadota</taxon>
        <taxon>Betaproteobacteria</taxon>
        <taxon>Burkholderiales</taxon>
        <taxon>Comamonadaceae</taxon>
        <taxon>Acidovorax</taxon>
    </lineage>
</organism>
<reference key="1">
    <citation type="submission" date="2006-12" db="EMBL/GenBank/DDBJ databases">
        <title>Complete sequence of chromosome 1 of Acidovorax sp. JS42.</title>
        <authorList>
            <person name="Copeland A."/>
            <person name="Lucas S."/>
            <person name="Lapidus A."/>
            <person name="Barry K."/>
            <person name="Detter J.C."/>
            <person name="Glavina del Rio T."/>
            <person name="Dalin E."/>
            <person name="Tice H."/>
            <person name="Pitluck S."/>
            <person name="Chertkov O."/>
            <person name="Brettin T."/>
            <person name="Bruce D."/>
            <person name="Han C."/>
            <person name="Tapia R."/>
            <person name="Gilna P."/>
            <person name="Schmutz J."/>
            <person name="Larimer F."/>
            <person name="Land M."/>
            <person name="Hauser L."/>
            <person name="Kyrpides N."/>
            <person name="Kim E."/>
            <person name="Stahl D."/>
            <person name="Richardson P."/>
        </authorList>
    </citation>
    <scope>NUCLEOTIDE SEQUENCE [LARGE SCALE GENOMIC DNA]</scope>
    <source>
        <strain>JS42</strain>
    </source>
</reference>
<name>RS2_ACISJ</name>
<dbReference type="EMBL" id="CP000539">
    <property type="protein sequence ID" value="ABM42743.1"/>
    <property type="molecule type" value="Genomic_DNA"/>
</dbReference>
<dbReference type="SMR" id="A1W918"/>
<dbReference type="STRING" id="232721.Ajs_2585"/>
<dbReference type="KEGG" id="ajs:Ajs_2585"/>
<dbReference type="eggNOG" id="COG0052">
    <property type="taxonomic scope" value="Bacteria"/>
</dbReference>
<dbReference type="HOGENOM" id="CLU_040318_2_3_4"/>
<dbReference type="Proteomes" id="UP000000645">
    <property type="component" value="Chromosome"/>
</dbReference>
<dbReference type="GO" id="GO:0022627">
    <property type="term" value="C:cytosolic small ribosomal subunit"/>
    <property type="evidence" value="ECO:0007669"/>
    <property type="project" value="TreeGrafter"/>
</dbReference>
<dbReference type="GO" id="GO:0003735">
    <property type="term" value="F:structural constituent of ribosome"/>
    <property type="evidence" value="ECO:0007669"/>
    <property type="project" value="InterPro"/>
</dbReference>
<dbReference type="GO" id="GO:0006412">
    <property type="term" value="P:translation"/>
    <property type="evidence" value="ECO:0007669"/>
    <property type="project" value="UniProtKB-UniRule"/>
</dbReference>
<dbReference type="CDD" id="cd01425">
    <property type="entry name" value="RPS2"/>
    <property type="match status" value="1"/>
</dbReference>
<dbReference type="FunFam" id="1.10.287.610:FF:000001">
    <property type="entry name" value="30S ribosomal protein S2"/>
    <property type="match status" value="1"/>
</dbReference>
<dbReference type="Gene3D" id="3.40.50.10490">
    <property type="entry name" value="Glucose-6-phosphate isomerase like protein, domain 1"/>
    <property type="match status" value="1"/>
</dbReference>
<dbReference type="Gene3D" id="1.10.287.610">
    <property type="entry name" value="Helix hairpin bin"/>
    <property type="match status" value="1"/>
</dbReference>
<dbReference type="HAMAP" id="MF_00291_B">
    <property type="entry name" value="Ribosomal_uS2_B"/>
    <property type="match status" value="1"/>
</dbReference>
<dbReference type="InterPro" id="IPR001865">
    <property type="entry name" value="Ribosomal_uS2"/>
</dbReference>
<dbReference type="InterPro" id="IPR005706">
    <property type="entry name" value="Ribosomal_uS2_bac/mit/plastid"/>
</dbReference>
<dbReference type="InterPro" id="IPR018130">
    <property type="entry name" value="Ribosomal_uS2_CS"/>
</dbReference>
<dbReference type="InterPro" id="IPR023591">
    <property type="entry name" value="Ribosomal_uS2_flav_dom_sf"/>
</dbReference>
<dbReference type="NCBIfam" id="TIGR01011">
    <property type="entry name" value="rpsB_bact"/>
    <property type="match status" value="1"/>
</dbReference>
<dbReference type="PANTHER" id="PTHR12534">
    <property type="entry name" value="30S RIBOSOMAL PROTEIN S2 PROKARYOTIC AND ORGANELLAR"/>
    <property type="match status" value="1"/>
</dbReference>
<dbReference type="PANTHER" id="PTHR12534:SF0">
    <property type="entry name" value="SMALL RIBOSOMAL SUBUNIT PROTEIN US2M"/>
    <property type="match status" value="1"/>
</dbReference>
<dbReference type="Pfam" id="PF00318">
    <property type="entry name" value="Ribosomal_S2"/>
    <property type="match status" value="1"/>
</dbReference>
<dbReference type="PRINTS" id="PR00395">
    <property type="entry name" value="RIBOSOMALS2"/>
</dbReference>
<dbReference type="SUPFAM" id="SSF52313">
    <property type="entry name" value="Ribosomal protein S2"/>
    <property type="match status" value="1"/>
</dbReference>
<dbReference type="PROSITE" id="PS00962">
    <property type="entry name" value="RIBOSOMAL_S2_1"/>
    <property type="match status" value="1"/>
</dbReference>
<accession>A1W918</accession>
<sequence>MSVTMREMLEAGVHFGHQTRFWNPKMAPFIFGHRNKIHIINLEKSLPMFQEAQKFAKQLAANRGTILMVGTKRQARELVAEQAQRAGVPYVDQRWLGGMLTNFKTVKTSIKRLKDMKAQQEAGLESMSKKEQLMFSRELEKLEKDIGGIQDMAALPDAIFVIDVGYHKIAVSEAKKLGIPLIGVVDSNHSPEGIDYVIPGNDDSAKAVALYARGIADAILEGRANAVTEVAKAVAAEGSDEFVEVDENAA</sequence>
<feature type="chain" id="PRO_1000003879" description="Small ribosomal subunit protein uS2">
    <location>
        <begin position="1"/>
        <end position="250"/>
    </location>
</feature>